<protein>
    <recommendedName>
        <fullName evidence="1">ATP synthase subunit beta</fullName>
        <ecNumber evidence="1">7.1.2.2</ecNumber>
    </recommendedName>
    <alternativeName>
        <fullName evidence="1">ATP synthase F1 sector subunit beta</fullName>
    </alternativeName>
    <alternativeName>
        <fullName evidence="1">F-ATPase subunit beta</fullName>
    </alternativeName>
</protein>
<proteinExistence type="inferred from homology"/>
<dbReference type="EC" id="7.1.2.2" evidence="1"/>
<dbReference type="EMBL" id="AF008210">
    <property type="protein sequence ID" value="AAC38110.1"/>
    <property type="molecule type" value="Genomic_DNA"/>
</dbReference>
<dbReference type="EMBL" id="AE013218">
    <property type="protein sequence ID" value="AAM67580.1"/>
    <property type="molecule type" value="Genomic_DNA"/>
</dbReference>
<dbReference type="EMBL" id="Z15147">
    <property type="protein sequence ID" value="CAA78853.1"/>
    <property type="molecule type" value="Genomic_DNA"/>
</dbReference>
<dbReference type="EMBL" id="AJ247128">
    <property type="protein sequence ID" value="CAB95753.1"/>
    <property type="molecule type" value="Genomic_DNA"/>
</dbReference>
<dbReference type="PIR" id="S37647">
    <property type="entry name" value="S37647"/>
</dbReference>
<dbReference type="SMR" id="Q07232"/>
<dbReference type="STRING" id="198804.BUsg_008"/>
<dbReference type="KEGG" id="bas:BUsg_008"/>
<dbReference type="eggNOG" id="COG0055">
    <property type="taxonomic scope" value="Bacteria"/>
</dbReference>
<dbReference type="HOGENOM" id="CLU_022398_0_2_6"/>
<dbReference type="Proteomes" id="UP000000416">
    <property type="component" value="Chromosome"/>
</dbReference>
<dbReference type="GO" id="GO:0005886">
    <property type="term" value="C:plasma membrane"/>
    <property type="evidence" value="ECO:0007669"/>
    <property type="project" value="UniProtKB-SubCell"/>
</dbReference>
<dbReference type="GO" id="GO:0045259">
    <property type="term" value="C:proton-transporting ATP synthase complex"/>
    <property type="evidence" value="ECO:0007669"/>
    <property type="project" value="UniProtKB-KW"/>
</dbReference>
<dbReference type="GO" id="GO:0005524">
    <property type="term" value="F:ATP binding"/>
    <property type="evidence" value="ECO:0007669"/>
    <property type="project" value="UniProtKB-UniRule"/>
</dbReference>
<dbReference type="GO" id="GO:0016887">
    <property type="term" value="F:ATP hydrolysis activity"/>
    <property type="evidence" value="ECO:0007669"/>
    <property type="project" value="InterPro"/>
</dbReference>
<dbReference type="GO" id="GO:0046933">
    <property type="term" value="F:proton-transporting ATP synthase activity, rotational mechanism"/>
    <property type="evidence" value="ECO:0007669"/>
    <property type="project" value="UniProtKB-UniRule"/>
</dbReference>
<dbReference type="CDD" id="cd18110">
    <property type="entry name" value="ATP-synt_F1_beta_C"/>
    <property type="match status" value="1"/>
</dbReference>
<dbReference type="CDD" id="cd18115">
    <property type="entry name" value="ATP-synt_F1_beta_N"/>
    <property type="match status" value="1"/>
</dbReference>
<dbReference type="CDD" id="cd01133">
    <property type="entry name" value="F1-ATPase_beta_CD"/>
    <property type="match status" value="1"/>
</dbReference>
<dbReference type="FunFam" id="1.10.1140.10:FF:000001">
    <property type="entry name" value="ATP synthase subunit beta"/>
    <property type="match status" value="1"/>
</dbReference>
<dbReference type="FunFam" id="2.40.10.170:FF:000005">
    <property type="entry name" value="ATP synthase subunit beta"/>
    <property type="match status" value="1"/>
</dbReference>
<dbReference type="FunFam" id="3.40.50.300:FF:000004">
    <property type="entry name" value="ATP synthase subunit beta"/>
    <property type="match status" value="1"/>
</dbReference>
<dbReference type="Gene3D" id="2.40.10.170">
    <property type="match status" value="1"/>
</dbReference>
<dbReference type="Gene3D" id="1.10.1140.10">
    <property type="entry name" value="Bovine Mitochondrial F1-atpase, Atp Synthase Beta Chain, Chain D, domain 3"/>
    <property type="match status" value="1"/>
</dbReference>
<dbReference type="Gene3D" id="3.40.50.300">
    <property type="entry name" value="P-loop containing nucleotide triphosphate hydrolases"/>
    <property type="match status" value="1"/>
</dbReference>
<dbReference type="HAMAP" id="MF_01347">
    <property type="entry name" value="ATP_synth_beta_bact"/>
    <property type="match status" value="1"/>
</dbReference>
<dbReference type="InterPro" id="IPR003593">
    <property type="entry name" value="AAA+_ATPase"/>
</dbReference>
<dbReference type="InterPro" id="IPR055190">
    <property type="entry name" value="ATP-synt_VA_C"/>
</dbReference>
<dbReference type="InterPro" id="IPR005722">
    <property type="entry name" value="ATP_synth_F1_bsu"/>
</dbReference>
<dbReference type="InterPro" id="IPR020003">
    <property type="entry name" value="ATPase_a/bsu_AS"/>
</dbReference>
<dbReference type="InterPro" id="IPR050053">
    <property type="entry name" value="ATPase_alpha/beta_chains"/>
</dbReference>
<dbReference type="InterPro" id="IPR004100">
    <property type="entry name" value="ATPase_F1/V1/A1_a/bsu_N"/>
</dbReference>
<dbReference type="InterPro" id="IPR036121">
    <property type="entry name" value="ATPase_F1/V1/A1_a/bsu_N_sf"/>
</dbReference>
<dbReference type="InterPro" id="IPR000194">
    <property type="entry name" value="ATPase_F1/V1/A1_a/bsu_nucl-bd"/>
</dbReference>
<dbReference type="InterPro" id="IPR024034">
    <property type="entry name" value="ATPase_F1/V1_b/a_C"/>
</dbReference>
<dbReference type="InterPro" id="IPR027417">
    <property type="entry name" value="P-loop_NTPase"/>
</dbReference>
<dbReference type="NCBIfam" id="TIGR01039">
    <property type="entry name" value="atpD"/>
    <property type="match status" value="1"/>
</dbReference>
<dbReference type="PANTHER" id="PTHR15184">
    <property type="entry name" value="ATP SYNTHASE"/>
    <property type="match status" value="1"/>
</dbReference>
<dbReference type="PANTHER" id="PTHR15184:SF71">
    <property type="entry name" value="ATP SYNTHASE SUBUNIT BETA, MITOCHONDRIAL"/>
    <property type="match status" value="1"/>
</dbReference>
<dbReference type="Pfam" id="PF00006">
    <property type="entry name" value="ATP-synt_ab"/>
    <property type="match status" value="1"/>
</dbReference>
<dbReference type="Pfam" id="PF02874">
    <property type="entry name" value="ATP-synt_ab_N"/>
    <property type="match status" value="1"/>
</dbReference>
<dbReference type="Pfam" id="PF22919">
    <property type="entry name" value="ATP-synt_VA_C"/>
    <property type="match status" value="1"/>
</dbReference>
<dbReference type="SMART" id="SM00382">
    <property type="entry name" value="AAA"/>
    <property type="match status" value="1"/>
</dbReference>
<dbReference type="SUPFAM" id="SSF47917">
    <property type="entry name" value="C-terminal domain of alpha and beta subunits of F1 ATP synthase"/>
    <property type="match status" value="1"/>
</dbReference>
<dbReference type="SUPFAM" id="SSF50615">
    <property type="entry name" value="N-terminal domain of alpha and beta subunits of F1 ATP synthase"/>
    <property type="match status" value="1"/>
</dbReference>
<dbReference type="SUPFAM" id="SSF52540">
    <property type="entry name" value="P-loop containing nucleoside triphosphate hydrolases"/>
    <property type="match status" value="1"/>
</dbReference>
<dbReference type="PROSITE" id="PS00152">
    <property type="entry name" value="ATPASE_ALPHA_BETA"/>
    <property type="match status" value="1"/>
</dbReference>
<feature type="chain" id="PRO_0000144427" description="ATP synthase subunit beta">
    <location>
        <begin position="1"/>
        <end position="466"/>
    </location>
</feature>
<feature type="binding site" evidence="1">
    <location>
        <begin position="156"/>
        <end position="163"/>
    </location>
    <ligand>
        <name>ATP</name>
        <dbReference type="ChEBI" id="CHEBI:30616"/>
    </ligand>
</feature>
<feature type="sequence conflict" description="In Ref. 4 and 5." evidence="2" ref="4 5">
    <original>E</original>
    <variation>G</variation>
    <location>
        <position position="280"/>
    </location>
</feature>
<evidence type="ECO:0000255" key="1">
    <source>
        <dbReference type="HAMAP-Rule" id="MF_01347"/>
    </source>
</evidence>
<evidence type="ECO:0000305" key="2"/>
<accession>Q07232</accession>
<accession>O51872</accession>
<accession>Q93V14</accession>
<keyword id="KW-0066">ATP synthesis</keyword>
<keyword id="KW-0067">ATP-binding</keyword>
<keyword id="KW-1003">Cell membrane</keyword>
<keyword id="KW-0139">CF(1)</keyword>
<keyword id="KW-0375">Hydrogen ion transport</keyword>
<keyword id="KW-0406">Ion transport</keyword>
<keyword id="KW-0472">Membrane</keyword>
<keyword id="KW-0547">Nucleotide-binding</keyword>
<keyword id="KW-1278">Translocase</keyword>
<keyword id="KW-0813">Transport</keyword>
<organism>
    <name type="scientific">Buchnera aphidicola subsp. Schizaphis graminum (strain Sg)</name>
    <dbReference type="NCBI Taxonomy" id="198804"/>
    <lineage>
        <taxon>Bacteria</taxon>
        <taxon>Pseudomonadati</taxon>
        <taxon>Pseudomonadota</taxon>
        <taxon>Gammaproteobacteria</taxon>
        <taxon>Enterobacterales</taxon>
        <taxon>Erwiniaceae</taxon>
        <taxon>Buchnera</taxon>
    </lineage>
</organism>
<reference key="1">
    <citation type="journal article" date="1997" name="Curr. Microbiol.">
        <title>The (F1F0) ATP synthase of Buchnera aphidicola (endosymbiont of aphids): genetic analysis of the putative ATP operon.</title>
        <authorList>
            <person name="Clark M.A."/>
            <person name="Baumann P."/>
        </authorList>
    </citation>
    <scope>NUCLEOTIDE SEQUENCE [GENOMIC DNA]</scope>
</reference>
<reference key="2">
    <citation type="journal article" date="1998" name="Curr. Microbiol.">
        <title>Sequence analysis of a 34.7-kb DNA segment from the genome of Buchnera aphidicola (endosymbiont of aphids) containing groEL, dnaA, the atp operon, gidA, and rho.</title>
        <authorList>
            <person name="Clark M.A."/>
            <person name="Baumann L."/>
            <person name="Baumann P."/>
        </authorList>
    </citation>
    <scope>NUCLEOTIDE SEQUENCE [GENOMIC DNA]</scope>
</reference>
<reference key="3">
    <citation type="journal article" date="2002" name="Science">
        <title>50 million years of genomic stasis in endosymbiotic bacteria.</title>
        <authorList>
            <person name="Tamas I."/>
            <person name="Klasson L."/>
            <person name="Canbaeck B."/>
            <person name="Naeslund A.K."/>
            <person name="Eriksson A.-S."/>
            <person name="Wernegreen J.J."/>
            <person name="Sandstroem J.P."/>
            <person name="Moran N.A."/>
            <person name="Andersson S.G.E."/>
        </authorList>
    </citation>
    <scope>NUCLEOTIDE SEQUENCE [LARGE SCALE GENOMIC DNA]</scope>
    <source>
        <strain>Sg</strain>
    </source>
</reference>
<reference key="4">
    <citation type="journal article" date="1993" name="Curr. Microbiol.">
        <title>Aspects of energy-yielding metabolism in the aphid, Schizaphis graminum, and its endosymbiont: detection of gene fragments potentially coding for the ATP synthase beta-subunit and glyceraldehyde-3-phosphate dehydrogenase.</title>
        <authorList>
            <person name="Clark M.A."/>
            <person name="Baumann P."/>
        </authorList>
    </citation>
    <scope>NUCLEOTIDE SEQUENCE [GENOMIC DNA] OF 164-314</scope>
</reference>
<reference key="5">
    <citation type="submission" date="1999-06" db="EMBL/GenBank/DDBJ databases">
        <title>Effect of selection and random drift in the evolution of aphids endosymbionts.</title>
        <authorList>
            <person name="Latorre A."/>
            <person name="Buades C."/>
            <person name="Sabater B."/>
            <person name="Moya A."/>
        </authorList>
    </citation>
    <scope>NUCLEOTIDE SEQUENCE [GENOMIC DNA] OF 164-314</scope>
</reference>
<name>ATPB_BUCAP</name>
<sequence length="466" mass="51349">MIATGKIIQIIGAVVDVEFDQNSVPKIYNALEVKNKKIQLILEVQQQLGAGIVRTIAMGSTNGLKRGLIVIDLGHYIKVPVGQATLGRIINVLGKTIDNKGPLKNLDNSKLEYWEIHRSAPSYQEQASSQEILETGIKVIDLICPFSKGGKVGLFGGAGVGKTVNMMELIRNIAIEHSGYSVFTGVGERTREGNDFYHEMKDSKVLDKVSLVYGQMNEPPGNRLRVAFTGLTIAEKFRDEGRDVLLFIDNIYRYTLAGTEVSALLGRMPSAVGYQPTLAEEMGLLQERITSTKEGSITSVQAVYVPADDLTDPSPATTFAHLDSTVTLSRQIAALGIYPAIDPLNSTSRQLDPYIVGDEHYDTARGVQSILQRYQELKDIIAILGMDELSQEDKILVSRARKIQRFLSQPFFVAEVFTGFPGKYVSLKDNIRAFKGIIGGEFDNLPEQAFYMVGTIEEVIKKAKLL</sequence>
<gene>
    <name evidence="1" type="primary">atpD</name>
    <name type="synonym">uncD</name>
    <name type="ordered locus">BUsg_008</name>
</gene>
<comment type="function">
    <text evidence="1">Produces ATP from ADP in the presence of a proton gradient across the membrane. The catalytic sites are hosted primarily by the beta subunits.</text>
</comment>
<comment type="catalytic activity">
    <reaction evidence="1">
        <text>ATP + H2O + 4 H(+)(in) = ADP + phosphate + 5 H(+)(out)</text>
        <dbReference type="Rhea" id="RHEA:57720"/>
        <dbReference type="ChEBI" id="CHEBI:15377"/>
        <dbReference type="ChEBI" id="CHEBI:15378"/>
        <dbReference type="ChEBI" id="CHEBI:30616"/>
        <dbReference type="ChEBI" id="CHEBI:43474"/>
        <dbReference type="ChEBI" id="CHEBI:456216"/>
        <dbReference type="EC" id="7.1.2.2"/>
    </reaction>
</comment>
<comment type="subunit">
    <text evidence="1">F-type ATPases have 2 components, CF(1) - the catalytic core - and CF(0) - the membrane proton channel. CF(1) has five subunits: alpha(3), beta(3), gamma(1), delta(1), epsilon(1). CF(0) has three main subunits: a(1), b(2) and c(9-12). The alpha and beta chains form an alternating ring which encloses part of the gamma chain. CF(1) is attached to CF(0) by a central stalk formed by the gamma and epsilon chains, while a peripheral stalk is formed by the delta and b chains.</text>
</comment>
<comment type="subcellular location">
    <subcellularLocation>
        <location evidence="1">Cell membrane</location>
        <topology evidence="1">Peripheral membrane protein</topology>
    </subcellularLocation>
</comment>
<comment type="similarity">
    <text evidence="1">Belongs to the ATPase alpha/beta chains family.</text>
</comment>